<evidence type="ECO:0000250" key="1"/>
<evidence type="ECO:0000255" key="2"/>
<evidence type="ECO:0000255" key="3">
    <source>
        <dbReference type="PROSITE-ProRule" id="PRU00521"/>
    </source>
</evidence>
<evidence type="ECO:0000256" key="4">
    <source>
        <dbReference type="SAM" id="MobiDB-lite"/>
    </source>
</evidence>
<evidence type="ECO:0000305" key="5"/>
<evidence type="ECO:0007829" key="6">
    <source>
        <dbReference type="PDB" id="6OL9"/>
    </source>
</evidence>
<comment type="function">
    <text>The muscarinic acetylcholine receptor mediates various cellular responses, including inhibition of adenylate cyclase, breakdown of phosphoinositides and modulation of potassium channels through the action of G proteins. Primary transducing effect is Pi turnover.</text>
</comment>
<comment type="interaction">
    <interactant intactId="EBI-6655256">
        <id>P08912</id>
    </interactant>
    <interactant intactId="EBI-2687785">
        <id>P20309</id>
        <label>CHRM3</label>
    </interactant>
    <organismsDiffer>false</organismsDiffer>
    <experiments>7</experiments>
</comment>
<comment type="subcellular location">
    <subcellularLocation>
        <location>Cell membrane</location>
        <topology>Multi-pass membrane protein</topology>
    </subcellularLocation>
    <subcellularLocation>
        <location>Postsynaptic cell membrane</location>
        <topology>Multi-pass membrane protein</topology>
    </subcellularLocation>
</comment>
<comment type="similarity">
    <text evidence="3">Belongs to the G-protein coupled receptor 1 family. Muscarinic acetylcholine receptor subfamily. CHRM5 sub-subfamily.</text>
</comment>
<organism>
    <name type="scientific">Homo sapiens</name>
    <name type="common">Human</name>
    <dbReference type="NCBI Taxonomy" id="9606"/>
    <lineage>
        <taxon>Eukaryota</taxon>
        <taxon>Metazoa</taxon>
        <taxon>Chordata</taxon>
        <taxon>Craniata</taxon>
        <taxon>Vertebrata</taxon>
        <taxon>Euteleostomi</taxon>
        <taxon>Mammalia</taxon>
        <taxon>Eutheria</taxon>
        <taxon>Euarchontoglires</taxon>
        <taxon>Primates</taxon>
        <taxon>Haplorrhini</taxon>
        <taxon>Catarrhini</taxon>
        <taxon>Hominidae</taxon>
        <taxon>Homo</taxon>
    </lineage>
</organism>
<proteinExistence type="evidence at protein level"/>
<sequence>MEGDSYHNATTVNGTPVNHQPLERHRLWEVITIAAVTAVVSLITIVGNVLVMISFKVNSQLKTVNNYYLLSLACADLIIGIFSMNLYTTYILMGRWALGSLACDLWLALDYVASNASVMNLLVISFDRYFSITRPLTYRAKRTPKRAGIMIGLAWLISFILWAPAILCWQYLVGKRTVPLDECQIQFLSEPTITFGTAIAAFYIPVSVMTILYCRIYRETEKRTKDLADLQGSDSVTKAEKRKPAHRALFRSCLRCPRPTLAQRERNQASWSSSRRSTSTTGKPSQATGPSANWAKAEQLTTCSSYPSSEDEDKPATDPVLQVVYKSQGKESPGEEFSAEETEETFVKAETEKSDYDTPNYLLSPAAAHRPKSQKCVAYKFRLVVKADGNQETNNGCHKVKIMPCPFPVAKEPSTKGLNPNPSHQMTKRKRVVLVKERKAAQTLSAILLAFIITWTPYNIMVLVSTFCDKCVPVTLWHLGYWLCYVNSTVNPICYALCNRTFRKTFKMLLLCRWKKKKVEEKLYWQGNSKLP</sequence>
<protein>
    <recommendedName>
        <fullName>Muscarinic acetylcholine receptor M5</fullName>
    </recommendedName>
</protein>
<dbReference type="EMBL" id="M80333">
    <property type="protein sequence ID" value="AAA51569.1"/>
    <property type="molecule type" value="Genomic_DNA"/>
</dbReference>
<dbReference type="EMBL" id="AF026263">
    <property type="protein sequence ID" value="AAB95158.1"/>
    <property type="molecule type" value="mRNA"/>
</dbReference>
<dbReference type="EMBL" id="AB084282">
    <property type="protein sequence ID" value="BAB91222.1"/>
    <property type="molecule type" value="mRNA"/>
</dbReference>
<dbReference type="EMBL" id="AF498919">
    <property type="protein sequence ID" value="AAM18942.1"/>
    <property type="molecule type" value="mRNA"/>
</dbReference>
<dbReference type="EMBL" id="AF385591">
    <property type="protein sequence ID" value="AAK68116.1"/>
    <property type="molecule type" value="mRNA"/>
</dbReference>
<dbReference type="CCDS" id="CCDS10031.1"/>
<dbReference type="PIR" id="JT0530">
    <property type="entry name" value="JT0530"/>
</dbReference>
<dbReference type="RefSeq" id="NP_001307846.1">
    <property type="nucleotide sequence ID" value="NM_001320917.2"/>
</dbReference>
<dbReference type="RefSeq" id="NP_036257.1">
    <property type="nucleotide sequence ID" value="NM_012125.4"/>
</dbReference>
<dbReference type="PDB" id="6OL9">
    <property type="method" value="X-ray"/>
    <property type="resolution" value="2.54 A"/>
    <property type="chains" value="A=21-224, A=431-532"/>
</dbReference>
<dbReference type="PDBsum" id="6OL9"/>
<dbReference type="SMR" id="P08912"/>
<dbReference type="BioGRID" id="107555">
    <property type="interactions" value="37"/>
</dbReference>
<dbReference type="CORUM" id="P08912"/>
<dbReference type="FunCoup" id="P08912">
    <property type="interactions" value="1133"/>
</dbReference>
<dbReference type="IntAct" id="P08912">
    <property type="interactions" value="37"/>
</dbReference>
<dbReference type="MINT" id="P08912"/>
<dbReference type="STRING" id="9606.ENSP00000372750"/>
<dbReference type="BindingDB" id="P08912"/>
<dbReference type="ChEMBL" id="CHEMBL2035"/>
<dbReference type="DrugBank" id="DB13262">
    <property type="generic name" value="Aceclidine"/>
</dbReference>
<dbReference type="DrugBank" id="DB08897">
    <property type="generic name" value="Aclidinium"/>
</dbReference>
<dbReference type="DrugBank" id="DB05752">
    <property type="generic name" value="ALKS 27"/>
</dbReference>
<dbReference type="DrugBank" id="DB00321">
    <property type="generic name" value="Amitriptyline"/>
</dbReference>
<dbReference type="DrugBank" id="DB00543">
    <property type="generic name" value="Amoxapine"/>
</dbReference>
<dbReference type="DrugBank" id="DB00517">
    <property type="generic name" value="Anisotropine methylbromide"/>
</dbReference>
<dbReference type="DrugBank" id="DB01238">
    <property type="generic name" value="Aripiprazole"/>
</dbReference>
<dbReference type="DrugBank" id="DB14185">
    <property type="generic name" value="Aripiprazole lauroxil"/>
</dbReference>
<dbReference type="DrugBank" id="DB00572">
    <property type="generic name" value="Atropine"/>
</dbReference>
<dbReference type="DrugBank" id="DB09023">
    <property type="generic name" value="Benactyzine"/>
</dbReference>
<dbReference type="DrugBank" id="DB00767">
    <property type="generic name" value="Benzquinamide"/>
</dbReference>
<dbReference type="DrugBank" id="DB01019">
    <property type="generic name" value="Bethanechol"/>
</dbReference>
<dbReference type="DrugBank" id="DB00835">
    <property type="generic name" value="Brompheniramine"/>
</dbReference>
<dbReference type="DrugBank" id="DB09300">
    <property type="generic name" value="Butylscopolamine"/>
</dbReference>
<dbReference type="DrugBank" id="DB11960">
    <property type="generic name" value="Carboxyamidotriazole"/>
</dbReference>
<dbReference type="DrugBank" id="DB01239">
    <property type="generic name" value="Chlorprothixene"/>
</dbReference>
<dbReference type="DrugBank" id="DB04660">
    <property type="generic name" value="Choline alfoscerate"/>
</dbReference>
<dbReference type="DrugBank" id="DB09271">
    <property type="generic name" value="Cimetropium"/>
</dbReference>
<dbReference type="DrugBank" id="DB00568">
    <property type="generic name" value="Cinnarizine"/>
</dbReference>
<dbReference type="DrugBank" id="DB00363">
    <property type="generic name" value="Clozapine"/>
</dbReference>
<dbReference type="DrugBank" id="DB00979">
    <property type="generic name" value="Cyclopentolate"/>
</dbReference>
<dbReference type="DrugBank" id="DB00496">
    <property type="generic name" value="Darifenacin"/>
</dbReference>
<dbReference type="DrugBank" id="DB01151">
    <property type="generic name" value="Desipramine"/>
</dbReference>
<dbReference type="DrugBank" id="DB09167">
    <property type="generic name" value="Dosulepin"/>
</dbReference>
<dbReference type="DrugBank" id="DB01142">
    <property type="generic name" value="Doxepin"/>
</dbReference>
<dbReference type="DrugBank" id="DB00366">
    <property type="generic name" value="Doxylamine"/>
</dbReference>
<dbReference type="DrugBank" id="DB13505">
    <property type="generic name" value="Emepronium"/>
</dbReference>
<dbReference type="DrugBank" id="DB09194">
    <property type="generic name" value="Etoperidone"/>
</dbReference>
<dbReference type="DrugBank" id="DB06702">
    <property type="generic name" value="Fesoterodine"/>
</dbReference>
<dbReference type="DrugBank" id="DB01148">
    <property type="generic name" value="Flavoxate"/>
</dbReference>
<dbReference type="DrugBank" id="DB00483">
    <property type="generic name" value="Gallamine triethiodide"/>
</dbReference>
<dbReference type="DrugBank" id="DB00986">
    <property type="generic name" value="Glycopyrronium"/>
</dbReference>
<dbReference type="DrugBank" id="DB11181">
    <property type="generic name" value="Homatropine"/>
</dbReference>
<dbReference type="DrugBank" id="DB00725">
    <property type="generic name" value="Homatropine methylbromide"/>
</dbReference>
<dbReference type="DrugBank" id="DB00424">
    <property type="generic name" value="Hyoscyamine"/>
</dbReference>
<dbReference type="DrugBank" id="DB00458">
    <property type="generic name" value="Imipramine"/>
</dbReference>
<dbReference type="DrugBank" id="DB01221">
    <property type="generic name" value="Ketamine"/>
</dbReference>
<dbReference type="DrugBank" id="DB00408">
    <property type="generic name" value="Loxapine"/>
</dbReference>
<dbReference type="DrugBank" id="DB00934">
    <property type="generic name" value="Maprotiline"/>
</dbReference>
<dbReference type="DrugBank" id="DB12554">
    <property type="generic name" value="Mebeverine"/>
</dbReference>
<dbReference type="DrugBank" id="DB04843">
    <property type="generic name" value="Mepenzolate"/>
</dbReference>
<dbReference type="DrugBank" id="DB00454">
    <property type="generic name" value="Meperidine"/>
</dbReference>
<dbReference type="DrugBank" id="DB06709">
    <property type="generic name" value="Methacholine"/>
</dbReference>
<dbReference type="DrugBank" id="DB00940">
    <property type="generic name" value="Methantheline"/>
</dbReference>
<dbReference type="DrugBank" id="DB01403">
    <property type="generic name" value="Methotrimeprazine"/>
</dbReference>
<dbReference type="DrugBank" id="DB00340">
    <property type="generic name" value="Metixene"/>
</dbReference>
<dbReference type="DrugBank" id="DB00622">
    <property type="generic name" value="Nicardipine"/>
</dbReference>
<dbReference type="DrugBank" id="DB00540">
    <property type="generic name" value="Nortriptyline"/>
</dbReference>
<dbReference type="DrugBank" id="DB12086">
    <property type="generic name" value="Oxitropium"/>
</dbReference>
<dbReference type="DrugBank" id="DB00383">
    <property type="generic name" value="Oxyphencyclimine"/>
</dbReference>
<dbReference type="DrugBank" id="DB00715">
    <property type="generic name" value="Paroxetine"/>
</dbReference>
<dbReference type="DrugBank" id="DB01085">
    <property type="generic name" value="Pilocarpine"/>
</dbReference>
<dbReference type="DrugBank" id="DB13247">
    <property type="generic name" value="Pramiracetam"/>
</dbReference>
<dbReference type="DrugBank" id="DB13254">
    <property type="generic name" value="Prifinium"/>
</dbReference>
<dbReference type="DrugBank" id="DB00387">
    <property type="generic name" value="Procyclidine"/>
</dbReference>
<dbReference type="DrugBank" id="DB00420">
    <property type="generic name" value="Promazine"/>
</dbReference>
<dbReference type="DrugBank" id="DB01069">
    <property type="generic name" value="Promethazine"/>
</dbReference>
<dbReference type="DrugBank" id="DB00777">
    <property type="generic name" value="Propiomazine"/>
</dbReference>
<dbReference type="DrugBank" id="DB12278">
    <property type="generic name" value="Propiverine"/>
</dbReference>
<dbReference type="DrugBank" id="DB01224">
    <property type="generic name" value="Quetiapine"/>
</dbReference>
<dbReference type="DrugBank" id="DB11855">
    <property type="generic name" value="Revefenacin"/>
</dbReference>
<dbReference type="DrugBank" id="DB13581">
    <property type="generic name" value="Rociverine"/>
</dbReference>
<dbReference type="DrugBank" id="DB00747">
    <property type="generic name" value="Scopolamine"/>
</dbReference>
<dbReference type="DrugBank" id="DB19325">
    <property type="generic name" value="Sofpironium"/>
</dbReference>
<dbReference type="DrugBank" id="DB01591">
    <property type="generic name" value="Solifenacin"/>
</dbReference>
<dbReference type="DrugBank" id="DB00342">
    <property type="generic name" value="Terfenadine"/>
</dbReference>
<dbReference type="DrugBank" id="DB11235">
    <property type="generic name" value="Thonzylamine"/>
</dbReference>
<dbReference type="DrugBank" id="DB01409">
    <property type="generic name" value="Tiotropium"/>
</dbReference>
<dbReference type="DrugBank" id="DB01036">
    <property type="generic name" value="Tolterodine"/>
</dbReference>
<dbReference type="DrugBank" id="DB00505">
    <property type="generic name" value="Tridihexethyl"/>
</dbReference>
<dbReference type="DrugBank" id="DB00376">
    <property type="generic name" value="Trihexyphenidyl"/>
</dbReference>
<dbReference type="DrugBank" id="DB00726">
    <property type="generic name" value="Trimipramine"/>
</dbReference>
<dbReference type="DrugBank" id="DB00209">
    <property type="generic name" value="Trospium"/>
</dbReference>
<dbReference type="DrugBank" id="DB09076">
    <property type="generic name" value="Umeclidinium"/>
</dbReference>
<dbReference type="DrugBank" id="DB15357">
    <property type="generic name" value="Xanomeline"/>
</dbReference>
<dbReference type="DrugBank" id="DB00246">
    <property type="generic name" value="Ziprasidone"/>
</dbReference>
<dbReference type="DrugCentral" id="P08912"/>
<dbReference type="GuidetoPHARMACOLOGY" id="17"/>
<dbReference type="GlyCosmos" id="P08912">
    <property type="glycosylation" value="1 site, No reported glycans"/>
</dbReference>
<dbReference type="GlyGen" id="P08912">
    <property type="glycosylation" value="1 site"/>
</dbReference>
<dbReference type="iPTMnet" id="P08912"/>
<dbReference type="PhosphoSitePlus" id="P08912"/>
<dbReference type="BioMuta" id="CHRM5"/>
<dbReference type="DMDM" id="543761"/>
<dbReference type="PaxDb" id="9606-ENSP00000372750"/>
<dbReference type="PeptideAtlas" id="P08912"/>
<dbReference type="ProteomicsDB" id="52175"/>
<dbReference type="Antibodypedia" id="2963">
    <property type="antibodies" value="246 antibodies from 29 providers"/>
</dbReference>
<dbReference type="DNASU" id="1133"/>
<dbReference type="Ensembl" id="ENST00000383263.7">
    <property type="protein sequence ID" value="ENSP00000372750.5"/>
    <property type="gene ID" value="ENSG00000184984.10"/>
</dbReference>
<dbReference type="Ensembl" id="ENST00000557872.1">
    <property type="protein sequence ID" value="ENSP00000453745.1"/>
    <property type="gene ID" value="ENSG00000184984.10"/>
</dbReference>
<dbReference type="GeneID" id="1133"/>
<dbReference type="KEGG" id="hsa:1133"/>
<dbReference type="MANE-Select" id="ENST00000383263.7">
    <property type="protein sequence ID" value="ENSP00000372750.5"/>
    <property type="RefSeq nucleotide sequence ID" value="NM_012125.4"/>
    <property type="RefSeq protein sequence ID" value="NP_036257.1"/>
</dbReference>
<dbReference type="UCSC" id="uc001zhk.2">
    <property type="organism name" value="human"/>
</dbReference>
<dbReference type="AGR" id="HGNC:1954"/>
<dbReference type="CTD" id="1133"/>
<dbReference type="DisGeNET" id="1133"/>
<dbReference type="GeneCards" id="CHRM5"/>
<dbReference type="HGNC" id="HGNC:1954">
    <property type="gene designation" value="CHRM5"/>
</dbReference>
<dbReference type="HPA" id="ENSG00000184984">
    <property type="expression patterns" value="Tissue enriched (brain)"/>
</dbReference>
<dbReference type="MIM" id="118496">
    <property type="type" value="gene"/>
</dbReference>
<dbReference type="neXtProt" id="NX_P08912"/>
<dbReference type="OpenTargets" id="ENSG00000184984"/>
<dbReference type="PharmGKB" id="PA26486"/>
<dbReference type="VEuPathDB" id="HostDB:ENSG00000184984"/>
<dbReference type="eggNOG" id="KOG4220">
    <property type="taxonomic scope" value="Eukaryota"/>
</dbReference>
<dbReference type="GeneTree" id="ENSGT00940000158450"/>
<dbReference type="HOGENOM" id="CLU_009579_11_2_1"/>
<dbReference type="InParanoid" id="P08912"/>
<dbReference type="OMA" id="IPVTLWH"/>
<dbReference type="OrthoDB" id="10071887at2759"/>
<dbReference type="PAN-GO" id="P08912">
    <property type="GO annotations" value="8 GO annotations based on evolutionary models"/>
</dbReference>
<dbReference type="PhylomeDB" id="P08912"/>
<dbReference type="TreeFam" id="TF320495"/>
<dbReference type="PathwayCommons" id="P08912"/>
<dbReference type="Reactome" id="R-HSA-390648">
    <property type="pathway name" value="Muscarinic acetylcholine receptors"/>
</dbReference>
<dbReference type="Reactome" id="R-HSA-416476">
    <property type="pathway name" value="G alpha (q) signalling events"/>
</dbReference>
<dbReference type="SignaLink" id="P08912"/>
<dbReference type="SIGNOR" id="P08912"/>
<dbReference type="BioGRID-ORCS" id="1133">
    <property type="hits" value="13 hits in 1157 CRISPR screens"/>
</dbReference>
<dbReference type="GeneWiki" id="Muscarinic_acetylcholine_receptor_M5"/>
<dbReference type="GenomeRNAi" id="1133"/>
<dbReference type="Pharos" id="P08912">
    <property type="development level" value="Tclin"/>
</dbReference>
<dbReference type="PRO" id="PR:P08912"/>
<dbReference type="Proteomes" id="UP000005640">
    <property type="component" value="Chromosome 15"/>
</dbReference>
<dbReference type="RNAct" id="P08912">
    <property type="molecule type" value="protein"/>
</dbReference>
<dbReference type="Bgee" id="ENSG00000184984">
    <property type="expression patterns" value="Expressed in male germ line stem cell (sensu Vertebrata) in testis and 80 other cell types or tissues"/>
</dbReference>
<dbReference type="ExpressionAtlas" id="P08912">
    <property type="expression patterns" value="baseline and differential"/>
</dbReference>
<dbReference type="GO" id="GO:0030425">
    <property type="term" value="C:dendrite"/>
    <property type="evidence" value="ECO:0000318"/>
    <property type="project" value="GO_Central"/>
</dbReference>
<dbReference type="GO" id="GO:0005886">
    <property type="term" value="C:plasma membrane"/>
    <property type="evidence" value="ECO:0000318"/>
    <property type="project" value="GO_Central"/>
</dbReference>
<dbReference type="GO" id="GO:0045211">
    <property type="term" value="C:postsynaptic membrane"/>
    <property type="evidence" value="ECO:0007669"/>
    <property type="project" value="UniProtKB-SubCell"/>
</dbReference>
<dbReference type="GO" id="GO:0045202">
    <property type="term" value="C:synapse"/>
    <property type="evidence" value="ECO:0000318"/>
    <property type="project" value="GO_Central"/>
</dbReference>
<dbReference type="GO" id="GO:0016907">
    <property type="term" value="F:G protein-coupled acetylcholine receptor activity"/>
    <property type="evidence" value="ECO:0000318"/>
    <property type="project" value="GO_Central"/>
</dbReference>
<dbReference type="GO" id="GO:0004435">
    <property type="term" value="F:phosphatidylinositol-4,5-bisphosphate phospholipase C activity"/>
    <property type="evidence" value="ECO:0000304"/>
    <property type="project" value="ProtInc"/>
</dbReference>
<dbReference type="GO" id="GO:0007197">
    <property type="term" value="P:adenylate cyclase-inhibiting G protein-coupled acetylcholine receptor signaling pathway"/>
    <property type="evidence" value="ECO:0000318"/>
    <property type="project" value="GO_Central"/>
</dbReference>
<dbReference type="GO" id="GO:0007268">
    <property type="term" value="P:chemical synaptic transmission"/>
    <property type="evidence" value="ECO:0000318"/>
    <property type="project" value="GO_Central"/>
</dbReference>
<dbReference type="GO" id="GO:0015872">
    <property type="term" value="P:dopamine transport"/>
    <property type="evidence" value="ECO:0007669"/>
    <property type="project" value="Ensembl"/>
</dbReference>
<dbReference type="GO" id="GO:0007213">
    <property type="term" value="P:G protein-coupled acetylcholine receptor signaling pathway"/>
    <property type="evidence" value="ECO:0000304"/>
    <property type="project" value="ProtInc"/>
</dbReference>
<dbReference type="GO" id="GO:0007187">
    <property type="term" value="P:G protein-coupled receptor signaling pathway, coupled to cyclic nucleotide second messenger"/>
    <property type="evidence" value="ECO:0000318"/>
    <property type="project" value="GO_Central"/>
</dbReference>
<dbReference type="GO" id="GO:0001696">
    <property type="term" value="P:gastric acid secretion"/>
    <property type="evidence" value="ECO:0007669"/>
    <property type="project" value="InterPro"/>
</dbReference>
<dbReference type="GO" id="GO:0060304">
    <property type="term" value="P:regulation of phosphatidylinositol dephosphorylation"/>
    <property type="evidence" value="ECO:0007669"/>
    <property type="project" value="Ensembl"/>
</dbReference>
<dbReference type="GO" id="GO:0019226">
    <property type="term" value="P:transmission of nerve impulse"/>
    <property type="evidence" value="ECO:0007669"/>
    <property type="project" value="Ensembl"/>
</dbReference>
<dbReference type="CDD" id="cd15300">
    <property type="entry name" value="7tmA_mAChR_M5"/>
    <property type="match status" value="1"/>
</dbReference>
<dbReference type="FunFam" id="1.20.1070.10:FF:000047">
    <property type="entry name" value="Muscarinic acetylcholine receptor"/>
    <property type="match status" value="1"/>
</dbReference>
<dbReference type="FunFam" id="1.20.1070.10:FF:000164">
    <property type="entry name" value="Muscarinic acetylcholine receptor"/>
    <property type="match status" value="1"/>
</dbReference>
<dbReference type="Gene3D" id="1.20.1070.10">
    <property type="entry name" value="Rhodopsin 7-helix transmembrane proteins"/>
    <property type="match status" value="2"/>
</dbReference>
<dbReference type="InterPro" id="IPR000276">
    <property type="entry name" value="GPCR_Rhodpsn"/>
</dbReference>
<dbReference type="InterPro" id="IPR017452">
    <property type="entry name" value="GPCR_Rhodpsn_7TM"/>
</dbReference>
<dbReference type="InterPro" id="IPR000502">
    <property type="entry name" value="Musac_Ach_M5_rcpt"/>
</dbReference>
<dbReference type="InterPro" id="IPR000995">
    <property type="entry name" value="Musac_Ach_rcpt"/>
</dbReference>
<dbReference type="PANTHER" id="PTHR24247">
    <property type="entry name" value="5-HYDROXYTRYPTAMINE RECEPTOR"/>
    <property type="match status" value="1"/>
</dbReference>
<dbReference type="PANTHER" id="PTHR24247:SF209">
    <property type="entry name" value="MUSCARINIC ACETYLCHOLINE RECEPTOR M5"/>
    <property type="match status" value="1"/>
</dbReference>
<dbReference type="Pfam" id="PF00001">
    <property type="entry name" value="7tm_1"/>
    <property type="match status" value="1"/>
</dbReference>
<dbReference type="PRINTS" id="PR00237">
    <property type="entry name" value="GPCRRHODOPSN"/>
</dbReference>
<dbReference type="PRINTS" id="PR00243">
    <property type="entry name" value="MUSCARINICR"/>
</dbReference>
<dbReference type="PRINTS" id="PR00542">
    <property type="entry name" value="MUSCRINICM5R"/>
</dbReference>
<dbReference type="SUPFAM" id="SSF81321">
    <property type="entry name" value="Family A G protein-coupled receptor-like"/>
    <property type="match status" value="1"/>
</dbReference>
<dbReference type="PROSITE" id="PS00237">
    <property type="entry name" value="G_PROTEIN_RECEP_F1_1"/>
    <property type="match status" value="1"/>
</dbReference>
<dbReference type="PROSITE" id="PS50262">
    <property type="entry name" value="G_PROTEIN_RECEP_F1_2"/>
    <property type="match status" value="1"/>
</dbReference>
<name>ACM5_HUMAN</name>
<accession>P08912</accession>
<accession>Q96RG7</accession>
<reference key="1">
    <citation type="journal article" date="1988" name="Neuron">
        <title>Cloning and expression of the human and rat m5 muscarinic acetylcholine receptor genes.</title>
        <authorList>
            <person name="Bonner T.I."/>
            <person name="Young A.C."/>
            <person name="Brann M.R."/>
            <person name="Buckley N.J."/>
        </authorList>
    </citation>
    <scope>NUCLEOTIDE SEQUENCE [GENOMIC DNA]</scope>
</reference>
<reference key="2">
    <citation type="submission" date="1997-09" db="EMBL/GenBank/DDBJ databases">
        <authorList>
            <person name="Rae J.L."/>
            <person name="Shepard A.R."/>
        </authorList>
    </citation>
    <scope>NUCLEOTIDE SEQUENCE [MRNA]</scope>
    <source>
        <tissue>Lens epithelium</tissue>
    </source>
</reference>
<reference key="3">
    <citation type="submission" date="2002-04" db="EMBL/GenBank/DDBJ databases">
        <title>Human muscarinic acetylcholine receptor 5 is localized on 15q13.1 and its expression in SH-SY5Y cells.</title>
        <authorList>
            <person name="Wang H."/>
            <person name="Yeomans J."/>
        </authorList>
    </citation>
    <scope>NUCLEOTIDE SEQUENCE [MRNA]</scope>
    <source>
        <tissue>Brain</tissue>
    </source>
</reference>
<reference key="4">
    <citation type="submission" date="2002-04" db="EMBL/GenBank/DDBJ databases">
        <title>cDNA clones of human proteins involved in signal transduction sequenced by the Guthrie cDNA resource center (www.cdna.org).</title>
        <authorList>
            <person name="Puhl H.L. III"/>
            <person name="Ikeda S.R."/>
            <person name="Aronstam R.S."/>
        </authorList>
    </citation>
    <scope>NUCLEOTIDE SEQUENCE [LARGE SCALE MRNA]</scope>
    <source>
        <tissue>Brain</tissue>
    </source>
</reference>
<reference key="5">
    <citation type="submission" date="2001-05" db="EMBL/GenBank/DDBJ databases">
        <title>Cloning cholinergic receptors in human keratinocytes.</title>
        <authorList>
            <person name="Arredondo J."/>
            <person name="Grando S.A."/>
        </authorList>
    </citation>
    <scope>NUCLEOTIDE SEQUENCE [MRNA] OF 1-526</scope>
    <source>
        <tissue>Keratinocyte</tissue>
    </source>
</reference>
<keyword id="KW-0002">3D-structure</keyword>
<keyword id="KW-1003">Cell membrane</keyword>
<keyword id="KW-1015">Disulfide bond</keyword>
<keyword id="KW-0297">G-protein coupled receptor</keyword>
<keyword id="KW-0325">Glycoprotein</keyword>
<keyword id="KW-0472">Membrane</keyword>
<keyword id="KW-0597">Phosphoprotein</keyword>
<keyword id="KW-0628">Postsynaptic cell membrane</keyword>
<keyword id="KW-0675">Receptor</keyword>
<keyword id="KW-1185">Reference proteome</keyword>
<keyword id="KW-0770">Synapse</keyword>
<keyword id="KW-0807">Transducer</keyword>
<keyword id="KW-0812">Transmembrane</keyword>
<keyword id="KW-1133">Transmembrane helix</keyword>
<gene>
    <name type="primary">CHRM5</name>
</gene>
<feature type="chain" id="PRO_0000069042" description="Muscarinic acetylcholine receptor M5">
    <location>
        <begin position="1"/>
        <end position="532"/>
    </location>
</feature>
<feature type="topological domain" description="Extracellular" evidence="1">
    <location>
        <begin position="1"/>
        <end position="29"/>
    </location>
</feature>
<feature type="transmembrane region" description="Helical; Name=1" evidence="1">
    <location>
        <begin position="30"/>
        <end position="53"/>
    </location>
</feature>
<feature type="topological domain" description="Cytoplasmic" evidence="1">
    <location>
        <begin position="54"/>
        <end position="66"/>
    </location>
</feature>
<feature type="transmembrane region" description="Helical; Name=2" evidence="1">
    <location>
        <begin position="67"/>
        <end position="87"/>
    </location>
</feature>
<feature type="topological domain" description="Extracellular" evidence="1">
    <location>
        <begin position="88"/>
        <end position="104"/>
    </location>
</feature>
<feature type="transmembrane region" description="Helical; Name=3" evidence="1">
    <location>
        <begin position="105"/>
        <end position="126"/>
    </location>
</feature>
<feature type="topological domain" description="Cytoplasmic" evidence="1">
    <location>
        <begin position="127"/>
        <end position="146"/>
    </location>
</feature>
<feature type="transmembrane region" description="Helical; Name=4" evidence="1">
    <location>
        <begin position="147"/>
        <end position="169"/>
    </location>
</feature>
<feature type="topological domain" description="Extracellular" evidence="1">
    <location>
        <begin position="170"/>
        <end position="191"/>
    </location>
</feature>
<feature type="transmembrane region" description="Helical; Name=5" evidence="1">
    <location>
        <begin position="192"/>
        <end position="214"/>
    </location>
</feature>
<feature type="topological domain" description="Cytoplasmic" evidence="1">
    <location>
        <begin position="215"/>
        <end position="443"/>
    </location>
</feature>
<feature type="transmembrane region" description="Helical; Name=6" evidence="1">
    <location>
        <begin position="444"/>
        <end position="464"/>
    </location>
</feature>
<feature type="topological domain" description="Extracellular" evidence="1">
    <location>
        <begin position="465"/>
        <end position="478"/>
    </location>
</feature>
<feature type="transmembrane region" description="Helical; Name=7" evidence="1">
    <location>
        <begin position="479"/>
        <end position="498"/>
    </location>
</feature>
<feature type="topological domain" description="Cytoplasmic" evidence="1">
    <location>
        <begin position="499"/>
        <end position="532"/>
    </location>
</feature>
<feature type="region of interest" description="Disordered" evidence="4">
    <location>
        <begin position="262"/>
        <end position="294"/>
    </location>
</feature>
<feature type="compositionally biased region" description="Low complexity" evidence="4">
    <location>
        <begin position="270"/>
        <end position="281"/>
    </location>
</feature>
<feature type="compositionally biased region" description="Polar residues" evidence="4">
    <location>
        <begin position="282"/>
        <end position="291"/>
    </location>
</feature>
<feature type="modified residue" description="Phosphothreonine" evidence="2">
    <location>
        <position position="501"/>
    </location>
</feature>
<feature type="modified residue" description="Phosphothreonine" evidence="2">
    <location>
        <position position="505"/>
    </location>
</feature>
<feature type="glycosylation site" description="N-linked (GlcNAc...) asparagine" evidence="2">
    <location>
        <position position="8"/>
    </location>
</feature>
<feature type="disulfide bond" evidence="3">
    <location>
        <begin position="103"/>
        <end position="183"/>
    </location>
</feature>
<feature type="sequence conflict" description="In Ref. 5." evidence="5" ref="5">
    <original>Q</original>
    <variation>P</variation>
    <location>
        <position position="526"/>
    </location>
</feature>
<feature type="helix" evidence="6">
    <location>
        <begin position="27"/>
        <end position="57"/>
    </location>
</feature>
<feature type="helix" evidence="6">
    <location>
        <begin position="59"/>
        <end position="61"/>
    </location>
</feature>
<feature type="helix" evidence="6">
    <location>
        <begin position="64"/>
        <end position="81"/>
    </location>
</feature>
<feature type="helix" evidence="6">
    <location>
        <begin position="83"/>
        <end position="93"/>
    </location>
</feature>
<feature type="helix" evidence="6">
    <location>
        <begin position="100"/>
        <end position="133"/>
    </location>
</feature>
<feature type="turn" evidence="6">
    <location>
        <begin position="135"/>
        <end position="138"/>
    </location>
</feature>
<feature type="helix" evidence="6">
    <location>
        <begin position="139"/>
        <end position="141"/>
    </location>
</feature>
<feature type="helix" evidence="6">
    <location>
        <begin position="144"/>
        <end position="173"/>
    </location>
</feature>
<feature type="helix" evidence="6">
    <location>
        <begin position="187"/>
        <end position="189"/>
    </location>
</feature>
<feature type="helix" evidence="6">
    <location>
        <begin position="191"/>
        <end position="201"/>
    </location>
</feature>
<feature type="helix" evidence="6">
    <location>
        <begin position="203"/>
        <end position="218"/>
    </location>
</feature>
<feature type="helix" evidence="6">
    <location>
        <begin position="431"/>
        <end position="466"/>
    </location>
</feature>
<feature type="strand" evidence="6">
    <location>
        <begin position="468"/>
        <end position="470"/>
    </location>
</feature>
<feature type="helix" evidence="6">
    <location>
        <begin position="474"/>
        <end position="498"/>
    </location>
</feature>
<feature type="helix" evidence="6">
    <location>
        <begin position="500"/>
        <end position="511"/>
    </location>
</feature>